<keyword id="KW-0997">Cell inner membrane</keyword>
<keyword id="KW-1003">Cell membrane</keyword>
<keyword id="KW-0378">Hydrolase</keyword>
<keyword id="KW-0472">Membrane</keyword>
<keyword id="KW-0479">Metal-binding</keyword>
<keyword id="KW-0482">Metalloprotease</keyword>
<keyword id="KW-0645">Protease</keyword>
<keyword id="KW-1185">Reference proteome</keyword>
<keyword id="KW-0812">Transmembrane</keyword>
<keyword id="KW-1133">Transmembrane helix</keyword>
<keyword id="KW-0862">Zinc</keyword>
<sequence length="293" mass="31957">MMRIALFLLTNLAVMVVFGLVLSLTGIQSSSVQGLMIMALLFGFGGSFVSLLMSKWMALRSVGGEVIEQPRNERERWLVNTVATQARQAGIAMPQVAIYHAPDINAFATGARRDASLVAVSTGLLQNMSPDEAEAVIAHEISHIANGDMVTMTLIQGVVNTFVIFISRILAQLAAGFMGGNRDEGEESNGNPLIYFAVATVLELVFGILASIITMWFSRHREFHADAGSAKLVGREKMIAALQRLKTSYEPQEATSMMAFCINGKSKSLSELFMTHPPLDKRIEALRTGEYLK</sequence>
<dbReference type="EC" id="3.4.24.-" evidence="2"/>
<dbReference type="EMBL" id="AE014075">
    <property type="protein sequence ID" value="AAN80697.1"/>
    <property type="molecule type" value="Genomic_DNA"/>
</dbReference>
<dbReference type="RefSeq" id="WP_000984517.1">
    <property type="nucleotide sequence ID" value="NZ_CP051263.1"/>
</dbReference>
<dbReference type="SMR" id="P65812"/>
<dbReference type="STRING" id="199310.c2238"/>
<dbReference type="MEROPS" id="M48.002"/>
<dbReference type="GeneID" id="93776079"/>
<dbReference type="KEGG" id="ecc:c2238"/>
<dbReference type="eggNOG" id="COG0501">
    <property type="taxonomic scope" value="Bacteria"/>
</dbReference>
<dbReference type="HOGENOM" id="CLU_042266_1_0_6"/>
<dbReference type="BioCyc" id="ECOL199310:C2238-MONOMER"/>
<dbReference type="Proteomes" id="UP000001410">
    <property type="component" value="Chromosome"/>
</dbReference>
<dbReference type="GO" id="GO:0005886">
    <property type="term" value="C:plasma membrane"/>
    <property type="evidence" value="ECO:0007669"/>
    <property type="project" value="UniProtKB-SubCell"/>
</dbReference>
<dbReference type="GO" id="GO:0004222">
    <property type="term" value="F:metalloendopeptidase activity"/>
    <property type="evidence" value="ECO:0007669"/>
    <property type="project" value="UniProtKB-UniRule"/>
</dbReference>
<dbReference type="GO" id="GO:0008270">
    <property type="term" value="F:zinc ion binding"/>
    <property type="evidence" value="ECO:0007669"/>
    <property type="project" value="UniProtKB-UniRule"/>
</dbReference>
<dbReference type="GO" id="GO:0006508">
    <property type="term" value="P:proteolysis"/>
    <property type="evidence" value="ECO:0007669"/>
    <property type="project" value="UniProtKB-KW"/>
</dbReference>
<dbReference type="CDD" id="cd07335">
    <property type="entry name" value="M48B_HtpX_like"/>
    <property type="match status" value="1"/>
</dbReference>
<dbReference type="FunFam" id="3.30.2010.10:FF:000001">
    <property type="entry name" value="Protease HtpX"/>
    <property type="match status" value="1"/>
</dbReference>
<dbReference type="Gene3D" id="3.30.2010.10">
    <property type="entry name" value="Metalloproteases ('zincins'), catalytic domain"/>
    <property type="match status" value="1"/>
</dbReference>
<dbReference type="HAMAP" id="MF_00188">
    <property type="entry name" value="Pept_M48_protease_HtpX"/>
    <property type="match status" value="1"/>
</dbReference>
<dbReference type="InterPro" id="IPR050083">
    <property type="entry name" value="HtpX_protease"/>
</dbReference>
<dbReference type="InterPro" id="IPR022919">
    <property type="entry name" value="Pept_M48_protease_HtpX"/>
</dbReference>
<dbReference type="InterPro" id="IPR001915">
    <property type="entry name" value="Peptidase_M48"/>
</dbReference>
<dbReference type="NCBIfam" id="NF003965">
    <property type="entry name" value="PRK05457.1"/>
    <property type="match status" value="1"/>
</dbReference>
<dbReference type="PANTHER" id="PTHR43221">
    <property type="entry name" value="PROTEASE HTPX"/>
    <property type="match status" value="1"/>
</dbReference>
<dbReference type="PANTHER" id="PTHR43221:SF1">
    <property type="entry name" value="PROTEASE HTPX"/>
    <property type="match status" value="1"/>
</dbReference>
<dbReference type="Pfam" id="PF01435">
    <property type="entry name" value="Peptidase_M48"/>
    <property type="match status" value="1"/>
</dbReference>
<gene>
    <name evidence="2" type="primary">htpX</name>
    <name type="ordered locus">c2238</name>
</gene>
<proteinExistence type="inferred from homology"/>
<reference key="1">
    <citation type="journal article" date="2002" name="Proc. Natl. Acad. Sci. U.S.A.">
        <title>Extensive mosaic structure revealed by the complete genome sequence of uropathogenic Escherichia coli.</title>
        <authorList>
            <person name="Welch R.A."/>
            <person name="Burland V."/>
            <person name="Plunkett G. III"/>
            <person name="Redford P."/>
            <person name="Roesch P."/>
            <person name="Rasko D."/>
            <person name="Buckles E.L."/>
            <person name="Liou S.-R."/>
            <person name="Boutin A."/>
            <person name="Hackett J."/>
            <person name="Stroud D."/>
            <person name="Mayhew G.F."/>
            <person name="Rose D.J."/>
            <person name="Zhou S."/>
            <person name="Schwartz D.C."/>
            <person name="Perna N.T."/>
            <person name="Mobley H.L.T."/>
            <person name="Donnenberg M.S."/>
            <person name="Blattner F.R."/>
        </authorList>
    </citation>
    <scope>NUCLEOTIDE SEQUENCE [LARGE SCALE GENOMIC DNA]</scope>
    <source>
        <strain>CFT073 / ATCC 700928 / UPEC</strain>
    </source>
</reference>
<organism>
    <name type="scientific">Escherichia coli O6:H1 (strain CFT073 / ATCC 700928 / UPEC)</name>
    <dbReference type="NCBI Taxonomy" id="199310"/>
    <lineage>
        <taxon>Bacteria</taxon>
        <taxon>Pseudomonadati</taxon>
        <taxon>Pseudomonadota</taxon>
        <taxon>Gammaproteobacteria</taxon>
        <taxon>Enterobacterales</taxon>
        <taxon>Enterobacteriaceae</taxon>
        <taxon>Escherichia</taxon>
    </lineage>
</organism>
<name>HTPX_ECOL6</name>
<evidence type="ECO:0000255" key="1"/>
<evidence type="ECO:0000255" key="2">
    <source>
        <dbReference type="HAMAP-Rule" id="MF_00188"/>
    </source>
</evidence>
<feature type="chain" id="PRO_0000138861" description="Protease HtpX">
    <location>
        <begin position="1"/>
        <end position="293"/>
    </location>
</feature>
<feature type="topological domain" description="Cytoplasmic" evidence="1">
    <location>
        <begin position="1"/>
        <end position="3"/>
    </location>
</feature>
<feature type="transmembrane region" description="Helical" evidence="2">
    <location>
        <begin position="4"/>
        <end position="24"/>
    </location>
</feature>
<feature type="topological domain" description="Periplasmic" evidence="1">
    <location>
        <begin position="25"/>
        <end position="33"/>
    </location>
</feature>
<feature type="transmembrane region" description="Helical" evidence="2">
    <location>
        <begin position="34"/>
        <end position="54"/>
    </location>
</feature>
<feature type="topological domain" description="Cytoplasmic" evidence="1">
    <location>
        <begin position="55"/>
        <end position="157"/>
    </location>
</feature>
<feature type="transmembrane region" description="Helical" evidence="2">
    <location>
        <begin position="158"/>
        <end position="178"/>
    </location>
</feature>
<feature type="topological domain" description="Periplasmic" evidence="1">
    <location>
        <begin position="179"/>
        <end position="192"/>
    </location>
</feature>
<feature type="transmembrane region" description="Helical" evidence="2">
    <location>
        <begin position="193"/>
        <end position="213"/>
    </location>
</feature>
<feature type="topological domain" description="Cytoplasmic" evidence="1">
    <location>
        <begin position="214"/>
        <end position="293"/>
    </location>
</feature>
<feature type="active site" evidence="2">
    <location>
        <position position="140"/>
    </location>
</feature>
<feature type="binding site" evidence="2">
    <location>
        <position position="139"/>
    </location>
    <ligand>
        <name>Zn(2+)</name>
        <dbReference type="ChEBI" id="CHEBI:29105"/>
        <note>catalytic</note>
    </ligand>
</feature>
<feature type="binding site" evidence="2">
    <location>
        <position position="143"/>
    </location>
    <ligand>
        <name>Zn(2+)</name>
        <dbReference type="ChEBI" id="CHEBI:29105"/>
        <note>catalytic</note>
    </ligand>
</feature>
<feature type="binding site" evidence="2">
    <location>
        <position position="222"/>
    </location>
    <ligand>
        <name>Zn(2+)</name>
        <dbReference type="ChEBI" id="CHEBI:29105"/>
        <note>catalytic</note>
    </ligand>
</feature>
<accession>P65812</accession>
<accession>Q8XCN0</accession>
<protein>
    <recommendedName>
        <fullName evidence="2">Protease HtpX</fullName>
        <ecNumber evidence="2">3.4.24.-</ecNumber>
    </recommendedName>
    <alternativeName>
        <fullName evidence="2">Heat shock protein HtpX</fullName>
    </alternativeName>
</protein>
<comment type="cofactor">
    <cofactor evidence="2">
        <name>Zn(2+)</name>
        <dbReference type="ChEBI" id="CHEBI:29105"/>
    </cofactor>
    <text evidence="2">Binds 1 zinc ion per subunit.</text>
</comment>
<comment type="subcellular location">
    <subcellularLocation>
        <location evidence="2">Cell inner membrane</location>
        <topology evidence="2">Multi-pass membrane protein</topology>
    </subcellularLocation>
</comment>
<comment type="similarity">
    <text evidence="2">Belongs to the peptidase M48B family.</text>
</comment>